<protein>
    <recommendedName>
        <fullName evidence="1">Orotidine 5'-phosphate decarboxylase</fullName>
        <ecNumber evidence="1">4.1.1.23</ecNumber>
    </recommendedName>
    <alternativeName>
        <fullName evidence="1">OMP decarboxylase</fullName>
        <shortName evidence="1">OMPDCase</shortName>
        <shortName evidence="1">OMPdecase</shortName>
    </alternativeName>
</protein>
<gene>
    <name evidence="1" type="primary">pyrF</name>
    <name type="ordered locus">DVU_0901</name>
</gene>
<sequence length="235" mass="24025">MAELVVALDFPAADVAVDMAGRLRGTAPWMKVGLELFCAAGPDVVRAVADLGFRVFLDLKFHDIPNTVRGAVRSAVRSGADMVNIHLMGGERMARAAVEGLHEGAQTTGSVPLLFGVTVLTSTAQGELPGISTDIGEYAASLAASGAAWGLNGVVCSGYEVESIKKRCGASFLCLTPGIRPGGGAGGDDQRRVMTPAQAVSAGSDYLVVGRPVTGAADPAAAARAIMAEMAAVRR</sequence>
<reference key="1">
    <citation type="journal article" date="2004" name="Nat. Biotechnol.">
        <title>The genome sequence of the anaerobic, sulfate-reducing bacterium Desulfovibrio vulgaris Hildenborough.</title>
        <authorList>
            <person name="Heidelberg J.F."/>
            <person name="Seshadri R."/>
            <person name="Haveman S.A."/>
            <person name="Hemme C.L."/>
            <person name="Paulsen I.T."/>
            <person name="Kolonay J.F."/>
            <person name="Eisen J.A."/>
            <person name="Ward N.L."/>
            <person name="Methe B.A."/>
            <person name="Brinkac L.M."/>
            <person name="Daugherty S.C."/>
            <person name="DeBoy R.T."/>
            <person name="Dodson R.J."/>
            <person name="Durkin A.S."/>
            <person name="Madupu R."/>
            <person name="Nelson W.C."/>
            <person name="Sullivan S.A."/>
            <person name="Fouts D.E."/>
            <person name="Haft D.H."/>
            <person name="Selengut J."/>
            <person name="Peterson J.D."/>
            <person name="Davidsen T.M."/>
            <person name="Zafar N."/>
            <person name="Zhou L."/>
            <person name="Radune D."/>
            <person name="Dimitrov G."/>
            <person name="Hance M."/>
            <person name="Tran K."/>
            <person name="Khouri H.M."/>
            <person name="Gill J."/>
            <person name="Utterback T.R."/>
            <person name="Feldblyum T.V."/>
            <person name="Wall J.D."/>
            <person name="Voordouw G."/>
            <person name="Fraser C.M."/>
        </authorList>
    </citation>
    <scope>NUCLEOTIDE SEQUENCE [LARGE SCALE GENOMIC DNA]</scope>
    <source>
        <strain>ATCC 29579 / DSM 644 / CCUG 34227 / NCIMB 8303 / VKM B-1760 / Hildenborough</strain>
    </source>
</reference>
<accession>Q72DM8</accession>
<keyword id="KW-0210">Decarboxylase</keyword>
<keyword id="KW-0456">Lyase</keyword>
<keyword id="KW-0665">Pyrimidine biosynthesis</keyword>
<keyword id="KW-1185">Reference proteome</keyword>
<feature type="chain" id="PRO_0000241855" description="Orotidine 5'-phosphate decarboxylase">
    <location>
        <begin position="1"/>
        <end position="235"/>
    </location>
</feature>
<feature type="active site" description="Proton donor" evidence="1">
    <location>
        <position position="60"/>
    </location>
</feature>
<feature type="binding site" evidence="1">
    <location>
        <position position="9"/>
    </location>
    <ligand>
        <name>substrate</name>
    </ligand>
</feature>
<feature type="binding site" evidence="1">
    <location>
        <position position="31"/>
    </location>
    <ligand>
        <name>substrate</name>
    </ligand>
</feature>
<feature type="binding site" evidence="1">
    <location>
        <begin position="58"/>
        <end position="67"/>
    </location>
    <ligand>
        <name>substrate</name>
    </ligand>
</feature>
<feature type="binding site" evidence="1">
    <location>
        <position position="121"/>
    </location>
    <ligand>
        <name>substrate</name>
    </ligand>
</feature>
<feature type="binding site" evidence="1">
    <location>
        <position position="180"/>
    </location>
    <ligand>
        <name>substrate</name>
    </ligand>
</feature>
<feature type="binding site" evidence="1">
    <location>
        <position position="190"/>
    </location>
    <ligand>
        <name>substrate</name>
    </ligand>
</feature>
<feature type="binding site" evidence="1">
    <location>
        <position position="210"/>
    </location>
    <ligand>
        <name>substrate</name>
    </ligand>
</feature>
<feature type="binding site" evidence="1">
    <location>
        <position position="211"/>
    </location>
    <ligand>
        <name>substrate</name>
    </ligand>
</feature>
<name>PYRF_NITV2</name>
<comment type="function">
    <text evidence="1">Catalyzes the decarboxylation of orotidine 5'-monophosphate (OMP) to uridine 5'-monophosphate (UMP).</text>
</comment>
<comment type="catalytic activity">
    <reaction evidence="1">
        <text>orotidine 5'-phosphate + H(+) = UMP + CO2</text>
        <dbReference type="Rhea" id="RHEA:11596"/>
        <dbReference type="ChEBI" id="CHEBI:15378"/>
        <dbReference type="ChEBI" id="CHEBI:16526"/>
        <dbReference type="ChEBI" id="CHEBI:57538"/>
        <dbReference type="ChEBI" id="CHEBI:57865"/>
        <dbReference type="EC" id="4.1.1.23"/>
    </reaction>
</comment>
<comment type="pathway">
    <text evidence="1">Pyrimidine metabolism; UMP biosynthesis via de novo pathway; UMP from orotate: step 2/2.</text>
</comment>
<comment type="subunit">
    <text evidence="1">Homodimer.</text>
</comment>
<comment type="similarity">
    <text evidence="1">Belongs to the OMP decarboxylase family. Type 1 subfamily.</text>
</comment>
<evidence type="ECO:0000255" key="1">
    <source>
        <dbReference type="HAMAP-Rule" id="MF_01200"/>
    </source>
</evidence>
<organism>
    <name type="scientific">Nitratidesulfovibrio vulgaris (strain ATCC 29579 / DSM 644 / CCUG 34227 / NCIMB 8303 / VKM B-1760 / Hildenborough)</name>
    <name type="common">Desulfovibrio vulgaris</name>
    <dbReference type="NCBI Taxonomy" id="882"/>
    <lineage>
        <taxon>Bacteria</taxon>
        <taxon>Pseudomonadati</taxon>
        <taxon>Thermodesulfobacteriota</taxon>
        <taxon>Desulfovibrionia</taxon>
        <taxon>Desulfovibrionales</taxon>
        <taxon>Desulfovibrionaceae</taxon>
        <taxon>Nitratidesulfovibrio</taxon>
    </lineage>
</organism>
<dbReference type="EC" id="4.1.1.23" evidence="1"/>
<dbReference type="EMBL" id="AE017285">
    <property type="protein sequence ID" value="AAS95381.1"/>
    <property type="molecule type" value="Genomic_DNA"/>
</dbReference>
<dbReference type="RefSeq" id="WP_010938200.1">
    <property type="nucleotide sequence ID" value="NC_002937.3"/>
</dbReference>
<dbReference type="RefSeq" id="YP_010122.1">
    <property type="nucleotide sequence ID" value="NC_002937.3"/>
</dbReference>
<dbReference type="SMR" id="Q72DM8"/>
<dbReference type="IntAct" id="Q72DM8">
    <property type="interactions" value="1"/>
</dbReference>
<dbReference type="STRING" id="882.DVU_0901"/>
<dbReference type="PaxDb" id="882-DVU_0901"/>
<dbReference type="EnsemblBacteria" id="AAS95381">
    <property type="protein sequence ID" value="AAS95381"/>
    <property type="gene ID" value="DVU_0901"/>
</dbReference>
<dbReference type="KEGG" id="dvu:DVU_0901"/>
<dbReference type="PATRIC" id="fig|882.5.peg.845"/>
<dbReference type="eggNOG" id="COG0284">
    <property type="taxonomic scope" value="Bacteria"/>
</dbReference>
<dbReference type="HOGENOM" id="CLU_067069_1_1_7"/>
<dbReference type="OrthoDB" id="9806203at2"/>
<dbReference type="PhylomeDB" id="Q72DM8"/>
<dbReference type="UniPathway" id="UPA00070">
    <property type="reaction ID" value="UER00120"/>
</dbReference>
<dbReference type="Proteomes" id="UP000002194">
    <property type="component" value="Chromosome"/>
</dbReference>
<dbReference type="GO" id="GO:0005829">
    <property type="term" value="C:cytosol"/>
    <property type="evidence" value="ECO:0007669"/>
    <property type="project" value="TreeGrafter"/>
</dbReference>
<dbReference type="GO" id="GO:0004590">
    <property type="term" value="F:orotidine-5'-phosphate decarboxylase activity"/>
    <property type="evidence" value="ECO:0007669"/>
    <property type="project" value="UniProtKB-UniRule"/>
</dbReference>
<dbReference type="GO" id="GO:0006207">
    <property type="term" value="P:'de novo' pyrimidine nucleobase biosynthetic process"/>
    <property type="evidence" value="ECO:0007669"/>
    <property type="project" value="InterPro"/>
</dbReference>
<dbReference type="GO" id="GO:0044205">
    <property type="term" value="P:'de novo' UMP biosynthetic process"/>
    <property type="evidence" value="ECO:0007669"/>
    <property type="project" value="UniProtKB-UniRule"/>
</dbReference>
<dbReference type="CDD" id="cd04725">
    <property type="entry name" value="OMP_decarboxylase_like"/>
    <property type="match status" value="1"/>
</dbReference>
<dbReference type="FunFam" id="3.20.20.70:FF:000015">
    <property type="entry name" value="Orotidine 5'-phosphate decarboxylase"/>
    <property type="match status" value="1"/>
</dbReference>
<dbReference type="Gene3D" id="3.20.20.70">
    <property type="entry name" value="Aldolase class I"/>
    <property type="match status" value="1"/>
</dbReference>
<dbReference type="HAMAP" id="MF_01200_B">
    <property type="entry name" value="OMPdecase_type1_B"/>
    <property type="match status" value="1"/>
</dbReference>
<dbReference type="InterPro" id="IPR013785">
    <property type="entry name" value="Aldolase_TIM"/>
</dbReference>
<dbReference type="InterPro" id="IPR014732">
    <property type="entry name" value="OMPdecase"/>
</dbReference>
<dbReference type="InterPro" id="IPR018089">
    <property type="entry name" value="OMPdecase_AS"/>
</dbReference>
<dbReference type="InterPro" id="IPR047596">
    <property type="entry name" value="OMPdecase_bac"/>
</dbReference>
<dbReference type="InterPro" id="IPR001754">
    <property type="entry name" value="OMPdeCOase_dom"/>
</dbReference>
<dbReference type="InterPro" id="IPR011060">
    <property type="entry name" value="RibuloseP-bd_barrel"/>
</dbReference>
<dbReference type="NCBIfam" id="NF001273">
    <property type="entry name" value="PRK00230.1"/>
    <property type="match status" value="1"/>
</dbReference>
<dbReference type="NCBIfam" id="TIGR01740">
    <property type="entry name" value="pyrF"/>
    <property type="match status" value="1"/>
</dbReference>
<dbReference type="PANTHER" id="PTHR32119">
    <property type="entry name" value="OROTIDINE 5'-PHOSPHATE DECARBOXYLASE"/>
    <property type="match status" value="1"/>
</dbReference>
<dbReference type="PANTHER" id="PTHR32119:SF2">
    <property type="entry name" value="OROTIDINE 5'-PHOSPHATE DECARBOXYLASE"/>
    <property type="match status" value="1"/>
</dbReference>
<dbReference type="Pfam" id="PF00215">
    <property type="entry name" value="OMPdecase"/>
    <property type="match status" value="1"/>
</dbReference>
<dbReference type="SMART" id="SM00934">
    <property type="entry name" value="OMPdecase"/>
    <property type="match status" value="1"/>
</dbReference>
<dbReference type="SUPFAM" id="SSF51366">
    <property type="entry name" value="Ribulose-phoshate binding barrel"/>
    <property type="match status" value="1"/>
</dbReference>
<dbReference type="PROSITE" id="PS00156">
    <property type="entry name" value="OMPDECASE"/>
    <property type="match status" value="1"/>
</dbReference>
<proteinExistence type="inferred from homology"/>